<protein>
    <recommendedName>
        <fullName evidence="1">Ribosomal RNA large subunit methyltransferase G</fullName>
        <ecNumber evidence="1">2.1.1.174</ecNumber>
    </recommendedName>
    <alternativeName>
        <fullName evidence="1">23S rRNA m2G1835 methyltransferase</fullName>
    </alternativeName>
    <alternativeName>
        <fullName evidence="1">rRNA (guanine-N(2)-)-methyltransferase RlmG</fullName>
    </alternativeName>
</protein>
<evidence type="ECO:0000255" key="1">
    <source>
        <dbReference type="HAMAP-Rule" id="MF_01859"/>
    </source>
</evidence>
<comment type="function">
    <text evidence="1">Specifically methylates the guanine in position 1835 (m2G1835) of 23S rRNA.</text>
</comment>
<comment type="catalytic activity">
    <reaction evidence="1">
        <text>guanosine(1835) in 23S rRNA + S-adenosyl-L-methionine = N(2)-methylguanosine(1835) in 23S rRNA + S-adenosyl-L-homocysteine + H(+)</text>
        <dbReference type="Rhea" id="RHEA:42744"/>
        <dbReference type="Rhea" id="RHEA-COMP:10217"/>
        <dbReference type="Rhea" id="RHEA-COMP:10218"/>
        <dbReference type="ChEBI" id="CHEBI:15378"/>
        <dbReference type="ChEBI" id="CHEBI:57856"/>
        <dbReference type="ChEBI" id="CHEBI:59789"/>
        <dbReference type="ChEBI" id="CHEBI:74269"/>
        <dbReference type="ChEBI" id="CHEBI:74481"/>
        <dbReference type="EC" id="2.1.1.174"/>
    </reaction>
</comment>
<comment type="subcellular location">
    <subcellularLocation>
        <location evidence="1">Cytoplasm</location>
    </subcellularLocation>
</comment>
<comment type="similarity">
    <text evidence="1">Belongs to the methyltransferase superfamily. RlmG family.</text>
</comment>
<gene>
    <name evidence="1" type="primary">rlmG</name>
    <name type="ordered locus">YpAngola_A1094</name>
</gene>
<organism>
    <name type="scientific">Yersinia pestis bv. Antiqua (strain Angola)</name>
    <dbReference type="NCBI Taxonomy" id="349746"/>
    <lineage>
        <taxon>Bacteria</taxon>
        <taxon>Pseudomonadati</taxon>
        <taxon>Pseudomonadota</taxon>
        <taxon>Gammaproteobacteria</taxon>
        <taxon>Enterobacterales</taxon>
        <taxon>Yersiniaceae</taxon>
        <taxon>Yersinia</taxon>
    </lineage>
</organism>
<feature type="chain" id="PRO_0000366541" description="Ribosomal RNA large subunit methyltransferase G">
    <location>
        <begin position="1"/>
        <end position="395"/>
    </location>
</feature>
<reference key="1">
    <citation type="journal article" date="2010" name="J. Bacteriol.">
        <title>Genome sequence of the deep-rooted Yersinia pestis strain Angola reveals new insights into the evolution and pangenome of the plague bacterium.</title>
        <authorList>
            <person name="Eppinger M."/>
            <person name="Worsham P.L."/>
            <person name="Nikolich M.P."/>
            <person name="Riley D.R."/>
            <person name="Sebastian Y."/>
            <person name="Mou S."/>
            <person name="Achtman M."/>
            <person name="Lindler L.E."/>
            <person name="Ravel J."/>
        </authorList>
    </citation>
    <scope>NUCLEOTIDE SEQUENCE [LARGE SCALE GENOMIC DNA]</scope>
    <source>
        <strain>Angola</strain>
    </source>
</reference>
<sequence length="395" mass="43841">MSQLDLGTQSLELERFPPQENSNTLQAWEAADEYLLQNIDLSQIDGRPVLVFNDQFGTLACALHAYRPFSSSDSYMSQLATAHNLRLNHLDESAVTLLSSVDDLPEAPKLVVIKIPKALALLEHQLRALRRVVAPDTVIIAGAKSRDVHNSTLQLFEKILGPTKTTLAWKKARLIHCEVADIPLADAPETIDWPLPNTDYIIHNHANVFSRNNLDIGARFFMEILPYDVTGKIADLGCGNGVVGLIALEQNPLAEMLFVDESYMAVASSELNITVNRPQDLSRCEFMVSHGLAGVERESLQLVLCNPPFHQQHAVSDHVAWQMFCDAKRCLKAGGELMIVGNRHLDYFHKLKRLFGNCETLDSNQKFMVLKSVKQASSRSEGGGSGSLDMSYSDF</sequence>
<proteinExistence type="inferred from homology"/>
<accession>A9R1N3</accession>
<keyword id="KW-0963">Cytoplasm</keyword>
<keyword id="KW-0489">Methyltransferase</keyword>
<keyword id="KW-0698">rRNA processing</keyword>
<keyword id="KW-0949">S-adenosyl-L-methionine</keyword>
<keyword id="KW-0808">Transferase</keyword>
<name>RLMG_YERPG</name>
<dbReference type="EC" id="2.1.1.174" evidence="1"/>
<dbReference type="EMBL" id="CP000901">
    <property type="protein sequence ID" value="ABX86691.1"/>
    <property type="molecule type" value="Genomic_DNA"/>
</dbReference>
<dbReference type="RefSeq" id="WP_002210402.1">
    <property type="nucleotide sequence ID" value="NZ_CP009935.1"/>
</dbReference>
<dbReference type="SMR" id="A9R1N3"/>
<dbReference type="GeneID" id="57974028"/>
<dbReference type="KEGG" id="ypg:YpAngola_A1094"/>
<dbReference type="PATRIC" id="fig|349746.12.peg.2044"/>
<dbReference type="GO" id="GO:0005737">
    <property type="term" value="C:cytoplasm"/>
    <property type="evidence" value="ECO:0007669"/>
    <property type="project" value="UniProtKB-SubCell"/>
</dbReference>
<dbReference type="GO" id="GO:0052916">
    <property type="term" value="F:23S rRNA (guanine(1835)-N(2))-methyltransferase activity"/>
    <property type="evidence" value="ECO:0007669"/>
    <property type="project" value="UniProtKB-EC"/>
</dbReference>
<dbReference type="GO" id="GO:0003676">
    <property type="term" value="F:nucleic acid binding"/>
    <property type="evidence" value="ECO:0007669"/>
    <property type="project" value="InterPro"/>
</dbReference>
<dbReference type="CDD" id="cd02440">
    <property type="entry name" value="AdoMet_MTases"/>
    <property type="match status" value="1"/>
</dbReference>
<dbReference type="Gene3D" id="3.40.50.150">
    <property type="entry name" value="Vaccinia Virus protein VP39"/>
    <property type="match status" value="2"/>
</dbReference>
<dbReference type="HAMAP" id="MF_01859">
    <property type="entry name" value="23SrRNA_methyltr_G"/>
    <property type="match status" value="1"/>
</dbReference>
<dbReference type="InterPro" id="IPR002052">
    <property type="entry name" value="DNA_methylase_N6_adenine_CS"/>
</dbReference>
<dbReference type="InterPro" id="IPR017237">
    <property type="entry name" value="rRNA_m2G-MeTrfase_RlmG"/>
</dbReference>
<dbReference type="InterPro" id="IPR046977">
    <property type="entry name" value="RsmC/RlmG"/>
</dbReference>
<dbReference type="InterPro" id="IPR029063">
    <property type="entry name" value="SAM-dependent_MTases_sf"/>
</dbReference>
<dbReference type="InterPro" id="IPR007848">
    <property type="entry name" value="Small_mtfrase_dom"/>
</dbReference>
<dbReference type="NCBIfam" id="NF011577">
    <property type="entry name" value="PRK15001.1"/>
    <property type="match status" value="1"/>
</dbReference>
<dbReference type="PANTHER" id="PTHR47816:SF5">
    <property type="entry name" value="RIBOSOMAL RNA LARGE SUBUNIT METHYLTRANSFERASE G"/>
    <property type="match status" value="1"/>
</dbReference>
<dbReference type="PANTHER" id="PTHR47816">
    <property type="entry name" value="RIBOSOMAL RNA SMALL SUBUNIT METHYLTRANSFERASE C"/>
    <property type="match status" value="1"/>
</dbReference>
<dbReference type="Pfam" id="PF05175">
    <property type="entry name" value="MTS"/>
    <property type="match status" value="1"/>
</dbReference>
<dbReference type="PIRSF" id="PIRSF037565">
    <property type="entry name" value="RRNA_m2G_Mtase_RsmD_prd"/>
    <property type="match status" value="1"/>
</dbReference>
<dbReference type="SUPFAM" id="SSF53335">
    <property type="entry name" value="S-adenosyl-L-methionine-dependent methyltransferases"/>
    <property type="match status" value="1"/>
</dbReference>